<gene>
    <name evidence="1" type="primary">xylA</name>
    <name type="ordered locus">PBPRA0457</name>
</gene>
<organism>
    <name type="scientific">Photobacterium profundum (strain SS9)</name>
    <dbReference type="NCBI Taxonomy" id="298386"/>
    <lineage>
        <taxon>Bacteria</taxon>
        <taxon>Pseudomonadati</taxon>
        <taxon>Pseudomonadota</taxon>
        <taxon>Gammaproteobacteria</taxon>
        <taxon>Vibrionales</taxon>
        <taxon>Vibrionaceae</taxon>
        <taxon>Photobacterium</taxon>
    </lineage>
</organism>
<keyword id="KW-0119">Carbohydrate metabolism</keyword>
<keyword id="KW-0963">Cytoplasm</keyword>
<keyword id="KW-0413">Isomerase</keyword>
<keyword id="KW-0460">Magnesium</keyword>
<keyword id="KW-0479">Metal-binding</keyword>
<keyword id="KW-1185">Reference proteome</keyword>
<keyword id="KW-0859">Xylose metabolism</keyword>
<accession>Q6LUY7</accession>
<protein>
    <recommendedName>
        <fullName evidence="1">Xylose isomerase</fullName>
        <ecNumber evidence="1">5.3.1.5</ecNumber>
    </recommendedName>
</protein>
<proteinExistence type="inferred from homology"/>
<comment type="catalytic activity">
    <reaction evidence="1">
        <text>alpha-D-xylose = alpha-D-xylulofuranose</text>
        <dbReference type="Rhea" id="RHEA:22816"/>
        <dbReference type="ChEBI" id="CHEBI:28518"/>
        <dbReference type="ChEBI" id="CHEBI:188998"/>
        <dbReference type="EC" id="5.3.1.5"/>
    </reaction>
</comment>
<comment type="cofactor">
    <cofactor evidence="1">
        <name>Mg(2+)</name>
        <dbReference type="ChEBI" id="CHEBI:18420"/>
    </cofactor>
    <text evidence="1">Binds 2 magnesium ions per subunit.</text>
</comment>
<comment type="subunit">
    <text evidence="1">Homotetramer.</text>
</comment>
<comment type="subcellular location">
    <subcellularLocation>
        <location evidence="1">Cytoplasm</location>
    </subcellularLocation>
</comment>
<comment type="similarity">
    <text evidence="1">Belongs to the xylose isomerase family.</text>
</comment>
<comment type="sequence caution" evidence="2">
    <conflict type="erroneous initiation">
        <sequence resource="EMBL-CDS" id="CAG18888"/>
    </conflict>
</comment>
<sequence length="439" mass="49342">MTEFFKNINKIQFEGTDAINPLAFRHYDAERMILGKSMKEHLRFAACYWHNFCWPGSDVFGAATFDRPWLQSGNAMEMAHMKADAAFDFFSKLGVPYYCFHDTDIAPEGTSLKEYVNNFAQMVDVLEQKQDETGLKLLWGTANAFSNPRYMSGAGTNPDPKVFAYAATQIFNAMGATQRLGGENYVLWGGREGYETLLNTDLRQEREQLGRLMQMVVEHKHKIGFKGTILIEPKPQEPTKHQYDYDTATVYGFLKQFGLENEIKVNIEANHATLAGHSFQHEIATATSLGLFGSIDANRGDPQLGWDTDQFPNSVEENTLVMYEILKAGGFTTGGFNFDSHVRRPSIDAEDLFYGHIGGMDTMALALERAANMIENDVLSKNIAQRYAGWNEDLGKKILSGDHSLETLAKFALDSNIAPVKESGRQEHLENIVNGFIYK</sequence>
<dbReference type="EC" id="5.3.1.5" evidence="1"/>
<dbReference type="EMBL" id="CR378664">
    <property type="protein sequence ID" value="CAG18888.1"/>
    <property type="status" value="ALT_INIT"/>
    <property type="molecule type" value="Genomic_DNA"/>
</dbReference>
<dbReference type="RefSeq" id="WP_011217244.1">
    <property type="nucleotide sequence ID" value="NC_006370.1"/>
</dbReference>
<dbReference type="SMR" id="Q6LUY7"/>
<dbReference type="STRING" id="298386.PBPRA0457"/>
<dbReference type="KEGG" id="ppr:PBPRA0457"/>
<dbReference type="eggNOG" id="COG2115">
    <property type="taxonomic scope" value="Bacteria"/>
</dbReference>
<dbReference type="HOGENOM" id="CLU_037261_1_0_6"/>
<dbReference type="Proteomes" id="UP000000593">
    <property type="component" value="Chromosome 1"/>
</dbReference>
<dbReference type="GO" id="GO:0005737">
    <property type="term" value="C:cytoplasm"/>
    <property type="evidence" value="ECO:0007669"/>
    <property type="project" value="UniProtKB-SubCell"/>
</dbReference>
<dbReference type="GO" id="GO:0000287">
    <property type="term" value="F:magnesium ion binding"/>
    <property type="evidence" value="ECO:0007669"/>
    <property type="project" value="UniProtKB-UniRule"/>
</dbReference>
<dbReference type="GO" id="GO:0009045">
    <property type="term" value="F:xylose isomerase activity"/>
    <property type="evidence" value="ECO:0007669"/>
    <property type="project" value="UniProtKB-UniRule"/>
</dbReference>
<dbReference type="GO" id="GO:0042732">
    <property type="term" value="P:D-xylose metabolic process"/>
    <property type="evidence" value="ECO:0007669"/>
    <property type="project" value="UniProtKB-UniRule"/>
</dbReference>
<dbReference type="FunFam" id="3.20.20.150:FF:000002">
    <property type="entry name" value="Xylose isomerase"/>
    <property type="match status" value="1"/>
</dbReference>
<dbReference type="Gene3D" id="3.20.20.150">
    <property type="entry name" value="Divalent-metal-dependent TIM barrel enzymes"/>
    <property type="match status" value="1"/>
</dbReference>
<dbReference type="HAMAP" id="MF_00455">
    <property type="entry name" value="Xylose_isom_A"/>
    <property type="match status" value="1"/>
</dbReference>
<dbReference type="InterPro" id="IPR036237">
    <property type="entry name" value="Xyl_isomerase-like_sf"/>
</dbReference>
<dbReference type="InterPro" id="IPR013452">
    <property type="entry name" value="Xylose_isom_bac"/>
</dbReference>
<dbReference type="InterPro" id="IPR001998">
    <property type="entry name" value="Xylose_isomerase"/>
</dbReference>
<dbReference type="NCBIfam" id="NF003998">
    <property type="entry name" value="PRK05474.1"/>
    <property type="match status" value="1"/>
</dbReference>
<dbReference type="NCBIfam" id="TIGR02630">
    <property type="entry name" value="xylose_isom_A"/>
    <property type="match status" value="1"/>
</dbReference>
<dbReference type="PANTHER" id="PTHR48408">
    <property type="match status" value="1"/>
</dbReference>
<dbReference type="PANTHER" id="PTHR48408:SF1">
    <property type="entry name" value="XYLOSE ISOMERASE"/>
    <property type="match status" value="1"/>
</dbReference>
<dbReference type="PRINTS" id="PR00688">
    <property type="entry name" value="XYLOSISMRASE"/>
</dbReference>
<dbReference type="SUPFAM" id="SSF51658">
    <property type="entry name" value="Xylose isomerase-like"/>
    <property type="match status" value="1"/>
</dbReference>
<dbReference type="PROSITE" id="PS51415">
    <property type="entry name" value="XYLOSE_ISOMERASE"/>
    <property type="match status" value="1"/>
</dbReference>
<reference key="1">
    <citation type="journal article" date="2005" name="Science">
        <title>Life at depth: Photobacterium profundum genome sequence and expression analysis.</title>
        <authorList>
            <person name="Vezzi A."/>
            <person name="Campanaro S."/>
            <person name="D'Angelo M."/>
            <person name="Simonato F."/>
            <person name="Vitulo N."/>
            <person name="Lauro F.M."/>
            <person name="Cestaro A."/>
            <person name="Malacrida G."/>
            <person name="Simionati B."/>
            <person name="Cannata N."/>
            <person name="Romualdi C."/>
            <person name="Bartlett D.H."/>
            <person name="Valle G."/>
        </authorList>
    </citation>
    <scope>NUCLEOTIDE SEQUENCE [LARGE SCALE GENOMIC DNA]</scope>
    <source>
        <strain>ATCC BAA-1253 / SS9</strain>
    </source>
</reference>
<evidence type="ECO:0000255" key="1">
    <source>
        <dbReference type="HAMAP-Rule" id="MF_00455"/>
    </source>
</evidence>
<evidence type="ECO:0000305" key="2"/>
<feature type="chain" id="PRO_0000195786" description="Xylose isomerase">
    <location>
        <begin position="1"/>
        <end position="439"/>
    </location>
</feature>
<feature type="active site" evidence="1">
    <location>
        <position position="101"/>
    </location>
</feature>
<feature type="active site" evidence="1">
    <location>
        <position position="104"/>
    </location>
</feature>
<feature type="binding site" evidence="1">
    <location>
        <position position="232"/>
    </location>
    <ligand>
        <name>Mg(2+)</name>
        <dbReference type="ChEBI" id="CHEBI:18420"/>
        <label>1</label>
    </ligand>
</feature>
<feature type="binding site" evidence="1">
    <location>
        <position position="268"/>
    </location>
    <ligand>
        <name>Mg(2+)</name>
        <dbReference type="ChEBI" id="CHEBI:18420"/>
        <label>1</label>
    </ligand>
</feature>
<feature type="binding site" evidence="1">
    <location>
        <position position="268"/>
    </location>
    <ligand>
        <name>Mg(2+)</name>
        <dbReference type="ChEBI" id="CHEBI:18420"/>
        <label>2</label>
    </ligand>
</feature>
<feature type="binding site" evidence="1">
    <location>
        <position position="271"/>
    </location>
    <ligand>
        <name>Mg(2+)</name>
        <dbReference type="ChEBI" id="CHEBI:18420"/>
        <label>2</label>
    </ligand>
</feature>
<feature type="binding site" evidence="1">
    <location>
        <position position="296"/>
    </location>
    <ligand>
        <name>Mg(2+)</name>
        <dbReference type="ChEBI" id="CHEBI:18420"/>
        <label>1</label>
    </ligand>
</feature>
<feature type="binding site" evidence="1">
    <location>
        <position position="307"/>
    </location>
    <ligand>
        <name>Mg(2+)</name>
        <dbReference type="ChEBI" id="CHEBI:18420"/>
        <label>2</label>
    </ligand>
</feature>
<feature type="binding site" evidence="1">
    <location>
        <position position="309"/>
    </location>
    <ligand>
        <name>Mg(2+)</name>
        <dbReference type="ChEBI" id="CHEBI:18420"/>
        <label>2</label>
    </ligand>
</feature>
<feature type="binding site" evidence="1">
    <location>
        <position position="339"/>
    </location>
    <ligand>
        <name>Mg(2+)</name>
        <dbReference type="ChEBI" id="CHEBI:18420"/>
        <label>1</label>
    </ligand>
</feature>
<name>XYLA_PHOPR</name>